<feature type="chain" id="PRO_0000248129" description="Nucleoside triphosphate/diphosphate phosphatase">
    <location>
        <begin position="1"/>
        <end position="177"/>
    </location>
</feature>
<feature type="active site" description="Proton donor" evidence="1">
    <location>
        <position position="23"/>
    </location>
</feature>
<feature type="binding site" evidence="1">
    <location>
        <position position="87"/>
    </location>
    <ligand>
        <name>Mg(2+)</name>
        <dbReference type="ChEBI" id="CHEBI:18420"/>
        <label>1</label>
    </ligand>
</feature>
<feature type="binding site" evidence="1">
    <location>
        <position position="103"/>
    </location>
    <ligand>
        <name>Mg(2+)</name>
        <dbReference type="ChEBI" id="CHEBI:18420"/>
        <label>1</label>
    </ligand>
</feature>
<feature type="binding site" evidence="1">
    <location>
        <position position="105"/>
    </location>
    <ligand>
        <name>Mg(2+)</name>
        <dbReference type="ChEBI" id="CHEBI:18420"/>
        <label>2</label>
    </ligand>
</feature>
<feature type="binding site" evidence="1">
    <location>
        <position position="107"/>
    </location>
    <ligand>
        <name>Mg(2+)</name>
        <dbReference type="ChEBI" id="CHEBI:18420"/>
        <label>1</label>
    </ligand>
</feature>
<feature type="binding site" evidence="1">
    <location>
        <position position="107"/>
    </location>
    <ligand>
        <name>Mg(2+)</name>
        <dbReference type="ChEBI" id="CHEBI:18420"/>
        <label>2</label>
    </ligand>
</feature>
<feature type="binding site" evidence="1">
    <location>
        <position position="120"/>
    </location>
    <ligand>
        <name>Mg(2+)</name>
        <dbReference type="ChEBI" id="CHEBI:18420"/>
        <label>2</label>
    </ligand>
</feature>
<feature type="binding site" evidence="1">
    <location>
        <position position="123"/>
    </location>
    <ligand>
        <name>Mg(2+)</name>
        <dbReference type="ChEBI" id="CHEBI:18420"/>
        <label>2</label>
    </ligand>
</feature>
<comment type="function">
    <text evidence="1">Has nucleoside phosphatase activity towards nucleoside triphosphates and nucleoside diphosphates.</text>
</comment>
<comment type="catalytic activity">
    <reaction evidence="1">
        <text>a ribonucleoside 5'-triphosphate + H2O = a ribonucleoside 5'-diphosphate + phosphate + H(+)</text>
        <dbReference type="Rhea" id="RHEA:23680"/>
        <dbReference type="ChEBI" id="CHEBI:15377"/>
        <dbReference type="ChEBI" id="CHEBI:15378"/>
        <dbReference type="ChEBI" id="CHEBI:43474"/>
        <dbReference type="ChEBI" id="CHEBI:57930"/>
        <dbReference type="ChEBI" id="CHEBI:61557"/>
        <dbReference type="EC" id="3.6.1.15"/>
    </reaction>
</comment>
<comment type="catalytic activity">
    <reaction evidence="1">
        <text>a ribonucleoside 5'-diphosphate + H2O = a ribonucleoside 5'-phosphate + phosphate + H(+)</text>
        <dbReference type="Rhea" id="RHEA:36799"/>
        <dbReference type="ChEBI" id="CHEBI:15377"/>
        <dbReference type="ChEBI" id="CHEBI:15378"/>
        <dbReference type="ChEBI" id="CHEBI:43474"/>
        <dbReference type="ChEBI" id="CHEBI:57930"/>
        <dbReference type="ChEBI" id="CHEBI:58043"/>
        <dbReference type="EC" id="3.6.1.6"/>
    </reaction>
</comment>
<comment type="cofactor">
    <cofactor evidence="1">
        <name>Mg(2+)</name>
        <dbReference type="ChEBI" id="CHEBI:18420"/>
    </cofactor>
</comment>
<comment type="similarity">
    <text evidence="1">Belongs to the Ntdp family.</text>
</comment>
<evidence type="ECO:0000255" key="1">
    <source>
        <dbReference type="HAMAP-Rule" id="MF_01568"/>
    </source>
</evidence>
<gene>
    <name type="ordered locus">M28_Spy1362</name>
</gene>
<dbReference type="EC" id="3.6.1.15" evidence="1"/>
<dbReference type="EC" id="3.6.1.6" evidence="1"/>
<dbReference type="EMBL" id="CP000056">
    <property type="protein sequence ID" value="AAX72472.1"/>
    <property type="molecule type" value="Genomic_DNA"/>
</dbReference>
<dbReference type="RefSeq" id="WP_002983693.1">
    <property type="nucleotide sequence ID" value="NC_007296.2"/>
</dbReference>
<dbReference type="SMR" id="Q48S38"/>
<dbReference type="KEGG" id="spb:M28_Spy1362"/>
<dbReference type="HOGENOM" id="CLU_109787_1_0_9"/>
<dbReference type="GO" id="GO:0000287">
    <property type="term" value="F:magnesium ion binding"/>
    <property type="evidence" value="ECO:0007669"/>
    <property type="project" value="UniProtKB-UniRule"/>
</dbReference>
<dbReference type="GO" id="GO:0017110">
    <property type="term" value="F:nucleoside diphosphate phosphatase activity"/>
    <property type="evidence" value="ECO:0007669"/>
    <property type="project" value="UniProtKB-UniRule"/>
</dbReference>
<dbReference type="GO" id="GO:0017111">
    <property type="term" value="F:ribonucleoside triphosphate phosphatase activity"/>
    <property type="evidence" value="ECO:0007669"/>
    <property type="project" value="UniProtKB-UniRule"/>
</dbReference>
<dbReference type="Gene3D" id="2.40.380.10">
    <property type="entry name" value="FomD-like"/>
    <property type="match status" value="1"/>
</dbReference>
<dbReference type="HAMAP" id="MF_01568">
    <property type="entry name" value="Ntdp"/>
    <property type="match status" value="1"/>
</dbReference>
<dbReference type="InterPro" id="IPR007295">
    <property type="entry name" value="DUF402"/>
</dbReference>
<dbReference type="InterPro" id="IPR035930">
    <property type="entry name" value="FomD-like_sf"/>
</dbReference>
<dbReference type="InterPro" id="IPR050212">
    <property type="entry name" value="Ntdp-like"/>
</dbReference>
<dbReference type="InterPro" id="IPR016882">
    <property type="entry name" value="SA1684"/>
</dbReference>
<dbReference type="NCBIfam" id="NF010183">
    <property type="entry name" value="PRK13662.1"/>
    <property type="match status" value="1"/>
</dbReference>
<dbReference type="PANTHER" id="PTHR39159">
    <property type="match status" value="1"/>
</dbReference>
<dbReference type="PANTHER" id="PTHR39159:SF1">
    <property type="entry name" value="UPF0374 PROTEIN YGAC"/>
    <property type="match status" value="1"/>
</dbReference>
<dbReference type="Pfam" id="PF04167">
    <property type="entry name" value="DUF402"/>
    <property type="match status" value="1"/>
</dbReference>
<dbReference type="PIRSF" id="PIRSF028345">
    <property type="entry name" value="UCP028345"/>
    <property type="match status" value="1"/>
</dbReference>
<dbReference type="SUPFAM" id="SSF159234">
    <property type="entry name" value="FomD-like"/>
    <property type="match status" value="1"/>
</dbReference>
<reference key="1">
    <citation type="journal article" date="2005" name="J. Infect. Dis.">
        <title>Genome sequence of a serotype M28 strain of group A Streptococcus: potential new insights into puerperal sepsis and bacterial disease specificity.</title>
        <authorList>
            <person name="Green N.M."/>
            <person name="Zhang S."/>
            <person name="Porcella S.F."/>
            <person name="Nagiec M.J."/>
            <person name="Barbian K.D."/>
            <person name="Beres S.B."/>
            <person name="Lefebvre R.B."/>
            <person name="Musser J.M."/>
        </authorList>
    </citation>
    <scope>NUCLEOTIDE SEQUENCE [LARGE SCALE GENOMIC DNA]</scope>
    <source>
        <strain>MGAS6180</strain>
    </source>
</reference>
<proteinExistence type="inferred from homology"/>
<accession>Q48S38</accession>
<sequence length="177" mass="21178">MKLPKEGDFITIQSYKHDGSLHRTWRDTMVLKTTENALIGVNDHTLVTESDGRRWVTREPAIVYFHKKYWFNIIAMIRDNGVSYYCNLASPYMMDTEALKYIDYDLDVKVFADGEKRLLDVDEYEIHKKEMQYSADMDFILKENVKILVDWINHEKGPFSKAYITIWYKRYLELKNR</sequence>
<protein>
    <recommendedName>
        <fullName evidence="1">Nucleoside triphosphate/diphosphate phosphatase</fullName>
        <ecNumber evidence="1">3.6.1.15</ecNumber>
        <ecNumber evidence="1">3.6.1.6</ecNumber>
    </recommendedName>
</protein>
<keyword id="KW-0378">Hydrolase</keyword>
<keyword id="KW-0460">Magnesium</keyword>
<keyword id="KW-0479">Metal-binding</keyword>
<name>NTDP_STRPM</name>
<organism>
    <name type="scientific">Streptococcus pyogenes serotype M28 (strain MGAS6180)</name>
    <dbReference type="NCBI Taxonomy" id="319701"/>
    <lineage>
        <taxon>Bacteria</taxon>
        <taxon>Bacillati</taxon>
        <taxon>Bacillota</taxon>
        <taxon>Bacilli</taxon>
        <taxon>Lactobacillales</taxon>
        <taxon>Streptococcaceae</taxon>
        <taxon>Streptococcus</taxon>
    </lineage>
</organism>